<reference key="1">
    <citation type="journal article" date="1995" name="Virology">
        <title>The genome segments of DpRV, a commensal reovirus of the wasp Diadromus pulchellus (Hymenoptera).</title>
        <authorList>
            <person name="Bigot Y."/>
            <person name="Drezen J.M."/>
            <person name="Sizaret P.Y."/>
            <person name="Rabouille A."/>
            <person name="Hamelin M.H."/>
            <person name="Periquet G."/>
        </authorList>
    </citation>
    <scope>NUCLEOTIDE SEQUENCE [GENOMIC RNA]</scope>
</reference>
<proteinExistence type="predicted"/>
<organismHost>
    <name type="scientific">Diadromus pulchellus</name>
    <name type="common">Parasitic wasp</name>
    <dbReference type="NCBI Taxonomy" id="7420"/>
</organismHost>
<accession>Q86285</accession>
<feature type="chain" id="PRO_0000404250" description="Uncharacterized protein S7">
    <location>
        <begin position="1"/>
        <end position="436"/>
    </location>
</feature>
<name>S7_DPIRV</name>
<organism>
    <name type="scientific">Diadromus pulchellus idnoreovirus 1</name>
    <name type="common">DpIRV-1</name>
    <dbReference type="NCBI Taxonomy" id="37368"/>
    <lineage>
        <taxon>Viruses</taxon>
        <taxon>Riboviria</taxon>
        <taxon>Orthornavirae</taxon>
        <taxon>Duplornaviricota</taxon>
        <taxon>Resentoviricetes</taxon>
        <taxon>Reovirales</taxon>
        <taxon>Spinareoviridae</taxon>
        <taxon>Idnoreovirus</taxon>
        <taxon>Idnoreovirus 1</taxon>
    </lineage>
</organism>
<protein>
    <recommendedName>
        <fullName>Uncharacterized protein S7</fullName>
    </recommendedName>
</protein>
<sequence length="436" mass="49000">MNNDPDSEAVTITIDKTEIEKLVNLLTKGRLSSYRLTQTVTQMLDEKLNTGNGGYVSLNRREVTSMSMMRTKLEQLQRTTNKNALLGRMVFLSIANSEFVSEPNQEYMTSMIALLDKKANGIGTELFRVVRDMSPAEIGLKGAGQNYKSATISLESKAPIRQMMQNQYQDKVIDEAIDIIDGFCSSDLAIQPLCQTKILQSLAQYKYLVNEFGTTMPTYSDGTKDITVKEESAITEAEWKALDLDKPLLEQDFSYAKTTRTDIVITPWSNHTGIEFKSEETYIGRNSGIEIDGVRLKLKLGGLKKIWTSVKNFFQTNKPMIKVLLHEGLKIAKPYLSPVSKKSCRECYRIPRNWTSSIYFNNSGDGTIAKDSKATVLKILPQLARLGKLNLSTNEISTDNTRVGLSDYNDEAISQIKVLGRAMDMSPTTIIRFNKR</sequence>
<gene>
    <name type="primary">S7</name>
</gene>
<dbReference type="EMBL" id="X82048">
    <property type="protein sequence ID" value="CAA57564.1"/>
    <property type="molecule type" value="Genomic_RNA"/>
</dbReference>